<comment type="function">
    <text evidence="1">Involved in mRNA degradation. Catalyzes the phosphorolysis of single-stranded polyribonucleotides processively in the 3'- to 5'-direction.</text>
</comment>
<comment type="catalytic activity">
    <reaction evidence="1">
        <text>RNA(n+1) + phosphate = RNA(n) + a ribonucleoside 5'-diphosphate</text>
        <dbReference type="Rhea" id="RHEA:22096"/>
        <dbReference type="Rhea" id="RHEA-COMP:14527"/>
        <dbReference type="Rhea" id="RHEA-COMP:17342"/>
        <dbReference type="ChEBI" id="CHEBI:43474"/>
        <dbReference type="ChEBI" id="CHEBI:57930"/>
        <dbReference type="ChEBI" id="CHEBI:140395"/>
        <dbReference type="EC" id="2.7.7.8"/>
    </reaction>
</comment>
<comment type="cofactor">
    <cofactor evidence="1">
        <name>Mg(2+)</name>
        <dbReference type="ChEBI" id="CHEBI:18420"/>
    </cofactor>
</comment>
<comment type="subcellular location">
    <subcellularLocation>
        <location evidence="1">Cytoplasm</location>
    </subcellularLocation>
</comment>
<comment type="similarity">
    <text evidence="1">Belongs to the polyribonucleotide nucleotidyltransferase family.</text>
</comment>
<evidence type="ECO:0000255" key="1">
    <source>
        <dbReference type="HAMAP-Rule" id="MF_01595"/>
    </source>
</evidence>
<evidence type="ECO:0000256" key="2">
    <source>
        <dbReference type="SAM" id="MobiDB-lite"/>
    </source>
</evidence>
<feature type="chain" id="PRO_0000381881" description="Polyribonucleotide nucleotidyltransferase">
    <location>
        <begin position="1"/>
        <end position="721"/>
    </location>
</feature>
<feature type="domain" description="KH" evidence="1">
    <location>
        <begin position="557"/>
        <end position="623"/>
    </location>
</feature>
<feature type="domain" description="S1 motif" evidence="1">
    <location>
        <begin position="625"/>
        <end position="693"/>
    </location>
</feature>
<feature type="region of interest" description="Disordered" evidence="2">
    <location>
        <begin position="693"/>
        <end position="721"/>
    </location>
</feature>
<feature type="binding site" evidence="1">
    <location>
        <position position="490"/>
    </location>
    <ligand>
        <name>Mg(2+)</name>
        <dbReference type="ChEBI" id="CHEBI:18420"/>
    </ligand>
</feature>
<feature type="binding site" evidence="1">
    <location>
        <position position="496"/>
    </location>
    <ligand>
        <name>Mg(2+)</name>
        <dbReference type="ChEBI" id="CHEBI:18420"/>
    </ligand>
</feature>
<keyword id="KW-0963">Cytoplasm</keyword>
<keyword id="KW-0460">Magnesium</keyword>
<keyword id="KW-0479">Metal-binding</keyword>
<keyword id="KW-0548">Nucleotidyltransferase</keyword>
<keyword id="KW-1185">Reference proteome</keyword>
<keyword id="KW-0694">RNA-binding</keyword>
<keyword id="KW-0808">Transferase</keyword>
<dbReference type="EC" id="2.7.7.8" evidence="1"/>
<dbReference type="EMBL" id="CP001114">
    <property type="protein sequence ID" value="ACO46832.1"/>
    <property type="molecule type" value="Genomic_DNA"/>
</dbReference>
<dbReference type="RefSeq" id="WP_012693954.1">
    <property type="nucleotide sequence ID" value="NC_012526.1"/>
</dbReference>
<dbReference type="SMR" id="C1CXB5"/>
<dbReference type="STRING" id="546414.Deide_18440"/>
<dbReference type="PaxDb" id="546414-Deide_18440"/>
<dbReference type="KEGG" id="ddr:Deide_18440"/>
<dbReference type="eggNOG" id="COG1185">
    <property type="taxonomic scope" value="Bacteria"/>
</dbReference>
<dbReference type="HOGENOM" id="CLU_004217_2_2_0"/>
<dbReference type="OrthoDB" id="9804305at2"/>
<dbReference type="Proteomes" id="UP000002208">
    <property type="component" value="Chromosome"/>
</dbReference>
<dbReference type="GO" id="GO:0005829">
    <property type="term" value="C:cytosol"/>
    <property type="evidence" value="ECO:0007669"/>
    <property type="project" value="TreeGrafter"/>
</dbReference>
<dbReference type="GO" id="GO:0000175">
    <property type="term" value="F:3'-5'-RNA exonuclease activity"/>
    <property type="evidence" value="ECO:0007669"/>
    <property type="project" value="TreeGrafter"/>
</dbReference>
<dbReference type="GO" id="GO:0000287">
    <property type="term" value="F:magnesium ion binding"/>
    <property type="evidence" value="ECO:0007669"/>
    <property type="project" value="UniProtKB-UniRule"/>
</dbReference>
<dbReference type="GO" id="GO:0004654">
    <property type="term" value="F:polyribonucleotide nucleotidyltransferase activity"/>
    <property type="evidence" value="ECO:0007669"/>
    <property type="project" value="UniProtKB-UniRule"/>
</dbReference>
<dbReference type="GO" id="GO:0003723">
    <property type="term" value="F:RNA binding"/>
    <property type="evidence" value="ECO:0007669"/>
    <property type="project" value="UniProtKB-UniRule"/>
</dbReference>
<dbReference type="GO" id="GO:0006402">
    <property type="term" value="P:mRNA catabolic process"/>
    <property type="evidence" value="ECO:0007669"/>
    <property type="project" value="UniProtKB-UniRule"/>
</dbReference>
<dbReference type="GO" id="GO:0006396">
    <property type="term" value="P:RNA processing"/>
    <property type="evidence" value="ECO:0007669"/>
    <property type="project" value="InterPro"/>
</dbReference>
<dbReference type="CDD" id="cd02393">
    <property type="entry name" value="KH-I_PNPase"/>
    <property type="match status" value="1"/>
</dbReference>
<dbReference type="CDD" id="cd11363">
    <property type="entry name" value="RNase_PH_PNPase_1"/>
    <property type="match status" value="1"/>
</dbReference>
<dbReference type="CDD" id="cd11364">
    <property type="entry name" value="RNase_PH_PNPase_2"/>
    <property type="match status" value="1"/>
</dbReference>
<dbReference type="CDD" id="cd04472">
    <property type="entry name" value="S1_PNPase"/>
    <property type="match status" value="1"/>
</dbReference>
<dbReference type="FunFam" id="3.30.1370.10:FF:000001">
    <property type="entry name" value="Polyribonucleotide nucleotidyltransferase"/>
    <property type="match status" value="1"/>
</dbReference>
<dbReference type="FunFam" id="3.30.230.70:FF:000001">
    <property type="entry name" value="Polyribonucleotide nucleotidyltransferase"/>
    <property type="match status" value="1"/>
</dbReference>
<dbReference type="FunFam" id="3.30.230.70:FF:000002">
    <property type="entry name" value="Polyribonucleotide nucleotidyltransferase"/>
    <property type="match status" value="1"/>
</dbReference>
<dbReference type="Gene3D" id="3.30.230.70">
    <property type="entry name" value="GHMP Kinase, N-terminal domain"/>
    <property type="match status" value="2"/>
</dbReference>
<dbReference type="Gene3D" id="3.30.1370.10">
    <property type="entry name" value="K Homology domain, type 1"/>
    <property type="match status" value="1"/>
</dbReference>
<dbReference type="Gene3D" id="2.40.50.140">
    <property type="entry name" value="Nucleic acid-binding proteins"/>
    <property type="match status" value="1"/>
</dbReference>
<dbReference type="HAMAP" id="MF_01595">
    <property type="entry name" value="PNPase"/>
    <property type="match status" value="1"/>
</dbReference>
<dbReference type="InterPro" id="IPR001247">
    <property type="entry name" value="ExoRNase_PH_dom1"/>
</dbReference>
<dbReference type="InterPro" id="IPR015847">
    <property type="entry name" value="ExoRNase_PH_dom2"/>
</dbReference>
<dbReference type="InterPro" id="IPR036345">
    <property type="entry name" value="ExoRNase_PH_dom2_sf"/>
</dbReference>
<dbReference type="InterPro" id="IPR004087">
    <property type="entry name" value="KH_dom"/>
</dbReference>
<dbReference type="InterPro" id="IPR004088">
    <property type="entry name" value="KH_dom_type_1"/>
</dbReference>
<dbReference type="InterPro" id="IPR036612">
    <property type="entry name" value="KH_dom_type_1_sf"/>
</dbReference>
<dbReference type="InterPro" id="IPR012340">
    <property type="entry name" value="NA-bd_OB-fold"/>
</dbReference>
<dbReference type="InterPro" id="IPR012162">
    <property type="entry name" value="PNPase"/>
</dbReference>
<dbReference type="InterPro" id="IPR027408">
    <property type="entry name" value="PNPase/RNase_PH_dom_sf"/>
</dbReference>
<dbReference type="InterPro" id="IPR015848">
    <property type="entry name" value="PNPase_PH_RNA-bd_bac/org-type"/>
</dbReference>
<dbReference type="InterPro" id="IPR020568">
    <property type="entry name" value="Ribosomal_Su5_D2-typ_SF"/>
</dbReference>
<dbReference type="InterPro" id="IPR003029">
    <property type="entry name" value="S1_domain"/>
</dbReference>
<dbReference type="NCBIfam" id="TIGR03591">
    <property type="entry name" value="polynuc_phos"/>
    <property type="match status" value="1"/>
</dbReference>
<dbReference type="NCBIfam" id="NF008805">
    <property type="entry name" value="PRK11824.1"/>
    <property type="match status" value="1"/>
</dbReference>
<dbReference type="PANTHER" id="PTHR11252">
    <property type="entry name" value="POLYRIBONUCLEOTIDE NUCLEOTIDYLTRANSFERASE"/>
    <property type="match status" value="1"/>
</dbReference>
<dbReference type="PANTHER" id="PTHR11252:SF0">
    <property type="entry name" value="POLYRIBONUCLEOTIDE NUCLEOTIDYLTRANSFERASE 1, MITOCHONDRIAL"/>
    <property type="match status" value="1"/>
</dbReference>
<dbReference type="Pfam" id="PF00013">
    <property type="entry name" value="KH_1"/>
    <property type="match status" value="1"/>
</dbReference>
<dbReference type="Pfam" id="PF03726">
    <property type="entry name" value="PNPase"/>
    <property type="match status" value="1"/>
</dbReference>
<dbReference type="Pfam" id="PF01138">
    <property type="entry name" value="RNase_PH"/>
    <property type="match status" value="2"/>
</dbReference>
<dbReference type="Pfam" id="PF03725">
    <property type="entry name" value="RNase_PH_C"/>
    <property type="match status" value="2"/>
</dbReference>
<dbReference type="Pfam" id="PF00575">
    <property type="entry name" value="S1"/>
    <property type="match status" value="1"/>
</dbReference>
<dbReference type="PIRSF" id="PIRSF005499">
    <property type="entry name" value="PNPase"/>
    <property type="match status" value="1"/>
</dbReference>
<dbReference type="SMART" id="SM00322">
    <property type="entry name" value="KH"/>
    <property type="match status" value="1"/>
</dbReference>
<dbReference type="SMART" id="SM00316">
    <property type="entry name" value="S1"/>
    <property type="match status" value="1"/>
</dbReference>
<dbReference type="SUPFAM" id="SSF54791">
    <property type="entry name" value="Eukaryotic type KH-domain (KH-domain type I)"/>
    <property type="match status" value="1"/>
</dbReference>
<dbReference type="SUPFAM" id="SSF50249">
    <property type="entry name" value="Nucleic acid-binding proteins"/>
    <property type="match status" value="1"/>
</dbReference>
<dbReference type="SUPFAM" id="SSF55666">
    <property type="entry name" value="Ribonuclease PH domain 2-like"/>
    <property type="match status" value="2"/>
</dbReference>
<dbReference type="SUPFAM" id="SSF54211">
    <property type="entry name" value="Ribosomal protein S5 domain 2-like"/>
    <property type="match status" value="2"/>
</dbReference>
<dbReference type="PROSITE" id="PS50084">
    <property type="entry name" value="KH_TYPE_1"/>
    <property type="match status" value="1"/>
</dbReference>
<dbReference type="PROSITE" id="PS50126">
    <property type="entry name" value="S1"/>
    <property type="match status" value="1"/>
</dbReference>
<sequence>MIGKTYTTMLGGRELSIETGRLAKLVSGSVTLRYGDTMLLVTAQAREEKSPLDFLPLTVEFEERHYAVGKIPGSFHRREGRPGEKAILSARITDRQLRPLFPKGYRHETQVIITVLSADQQNAPDVLGPIGASAALSISDIPWGGPTACVRVGQVDGQFIVNPTADQLTRSRMDLVVAGTRDAVMMVEAGAQTVSEEDLVSAIEFAHAEMQGVIDLIERMRAEVGQEKFNFLAEGDLTQDLVPELAEKARAGGIRDALLTTKKKERSARTKAVRDAIIAGYVPDPNAEGAAARIASLKDAYAKVEKQELRRLILEEDLRADGRNGRAVRPIWIEARPLPRAHGSAIFTRGETQVLGVATLGTERDEILVDDLTTEDNDKFMLHYNFPPYSTGEVKRMGGQSRREIGHGHLAKRAIRAVLPSFEEFPYVIRLVGEVLESNGSSSMATVCAGVLALMDAGVPIKAPVAGVAMGLVMEGDKYRVLTDILGLEDALGDMDFKVCGTAEGVTALQMDIKVGGITPQVMREALAQAREGRLHILGKMAEVLSSPRPELSPTAPRIISIKINPELIGKVIGPGGKQVRELEAMGAQVTIEEDGTIRVFSADGAAAEAVRARIAGLTKEAKVGEEYEGTVVKTAPFGAFVNLYAGQDGMLHISQISEERLSAVEDALNVGDKLRVKIAGIDDRGKIDLIRPELEGKIAPREPRAPRGGGDRGPRPPRRD</sequence>
<organism>
    <name type="scientific">Deinococcus deserti (strain DSM 17065 / CIP 109153 / LMG 22923 / VCD115)</name>
    <dbReference type="NCBI Taxonomy" id="546414"/>
    <lineage>
        <taxon>Bacteria</taxon>
        <taxon>Thermotogati</taxon>
        <taxon>Deinococcota</taxon>
        <taxon>Deinococci</taxon>
        <taxon>Deinococcales</taxon>
        <taxon>Deinococcaceae</taxon>
        <taxon>Deinococcus</taxon>
    </lineage>
</organism>
<gene>
    <name evidence="1" type="primary">pnp</name>
    <name type="ordered locus">Deide_18440</name>
</gene>
<accession>C1CXB5</accession>
<name>PNP_DEIDV</name>
<proteinExistence type="inferred from homology"/>
<protein>
    <recommendedName>
        <fullName evidence="1">Polyribonucleotide nucleotidyltransferase</fullName>
        <ecNumber evidence="1">2.7.7.8</ecNumber>
    </recommendedName>
    <alternativeName>
        <fullName evidence="1">Polynucleotide phosphorylase</fullName>
        <shortName evidence="1">PNPase</shortName>
    </alternativeName>
</protein>
<reference key="1">
    <citation type="journal article" date="2009" name="PLoS Genet.">
        <title>Alliance of proteomics and genomics to unravel the specificities of Sahara bacterium Deinococcus deserti.</title>
        <authorList>
            <person name="de Groot A."/>
            <person name="Dulermo R."/>
            <person name="Ortet P."/>
            <person name="Blanchard L."/>
            <person name="Guerin P."/>
            <person name="Fernandez B."/>
            <person name="Vacherie B."/>
            <person name="Dossat C."/>
            <person name="Jolivet E."/>
            <person name="Siguier P."/>
            <person name="Chandler M."/>
            <person name="Barakat M."/>
            <person name="Dedieu A."/>
            <person name="Barbe V."/>
            <person name="Heulin T."/>
            <person name="Sommer S."/>
            <person name="Achouak W."/>
            <person name="Armengaud J."/>
        </authorList>
    </citation>
    <scope>NUCLEOTIDE SEQUENCE [LARGE SCALE GENOMIC DNA]</scope>
    <source>
        <strain>DSM 17065 / CIP 109153 / LMG 22923 / VCD115</strain>
    </source>
</reference>